<proteinExistence type="inferred from homology"/>
<organism>
    <name type="scientific">Chlamydia caviae (strain ATCC VR-813 / DSM 19441 / 03DC25 / GPIC)</name>
    <name type="common">Chlamydophila caviae</name>
    <dbReference type="NCBI Taxonomy" id="227941"/>
    <lineage>
        <taxon>Bacteria</taxon>
        <taxon>Pseudomonadati</taxon>
        <taxon>Chlamydiota</taxon>
        <taxon>Chlamydiia</taxon>
        <taxon>Chlamydiales</taxon>
        <taxon>Chlamydiaceae</taxon>
        <taxon>Chlamydia/Chlamydophila group</taxon>
        <taxon>Chlamydia</taxon>
    </lineage>
</organism>
<evidence type="ECO:0000255" key="1">
    <source>
        <dbReference type="HAMAP-Rule" id="MF_00300"/>
    </source>
</evidence>
<dbReference type="EC" id="4.2.3.5" evidence="1"/>
<dbReference type="EMBL" id="AE015925">
    <property type="protein sequence ID" value="AAP05466.1"/>
    <property type="molecule type" value="Genomic_DNA"/>
</dbReference>
<dbReference type="RefSeq" id="WP_011006680.1">
    <property type="nucleotide sequence ID" value="NC_003361.3"/>
</dbReference>
<dbReference type="SMR" id="Q822F8"/>
<dbReference type="STRING" id="227941.CCA_00725"/>
<dbReference type="KEGG" id="cca:CCA_00725"/>
<dbReference type="eggNOG" id="COG0082">
    <property type="taxonomic scope" value="Bacteria"/>
</dbReference>
<dbReference type="HOGENOM" id="CLU_034547_0_2_0"/>
<dbReference type="OrthoDB" id="9771806at2"/>
<dbReference type="UniPathway" id="UPA00053">
    <property type="reaction ID" value="UER00090"/>
</dbReference>
<dbReference type="Proteomes" id="UP000002193">
    <property type="component" value="Chromosome"/>
</dbReference>
<dbReference type="GO" id="GO:0005829">
    <property type="term" value="C:cytosol"/>
    <property type="evidence" value="ECO:0007669"/>
    <property type="project" value="TreeGrafter"/>
</dbReference>
<dbReference type="GO" id="GO:0004107">
    <property type="term" value="F:chorismate synthase activity"/>
    <property type="evidence" value="ECO:0007669"/>
    <property type="project" value="UniProtKB-UniRule"/>
</dbReference>
<dbReference type="GO" id="GO:0010181">
    <property type="term" value="F:FMN binding"/>
    <property type="evidence" value="ECO:0007669"/>
    <property type="project" value="TreeGrafter"/>
</dbReference>
<dbReference type="GO" id="GO:0008652">
    <property type="term" value="P:amino acid biosynthetic process"/>
    <property type="evidence" value="ECO:0007669"/>
    <property type="project" value="UniProtKB-KW"/>
</dbReference>
<dbReference type="GO" id="GO:0009073">
    <property type="term" value="P:aromatic amino acid family biosynthetic process"/>
    <property type="evidence" value="ECO:0007669"/>
    <property type="project" value="UniProtKB-KW"/>
</dbReference>
<dbReference type="GO" id="GO:0009423">
    <property type="term" value="P:chorismate biosynthetic process"/>
    <property type="evidence" value="ECO:0007669"/>
    <property type="project" value="UniProtKB-UniRule"/>
</dbReference>
<dbReference type="CDD" id="cd07304">
    <property type="entry name" value="Chorismate_synthase"/>
    <property type="match status" value="1"/>
</dbReference>
<dbReference type="Gene3D" id="3.60.150.10">
    <property type="entry name" value="Chorismate synthase AroC"/>
    <property type="match status" value="1"/>
</dbReference>
<dbReference type="HAMAP" id="MF_00300">
    <property type="entry name" value="Chorismate_synth"/>
    <property type="match status" value="1"/>
</dbReference>
<dbReference type="InterPro" id="IPR000453">
    <property type="entry name" value="Chorismate_synth"/>
</dbReference>
<dbReference type="InterPro" id="IPR035904">
    <property type="entry name" value="Chorismate_synth_AroC_sf"/>
</dbReference>
<dbReference type="InterPro" id="IPR020541">
    <property type="entry name" value="Chorismate_synthase_CS"/>
</dbReference>
<dbReference type="NCBIfam" id="TIGR00033">
    <property type="entry name" value="aroC"/>
    <property type="match status" value="1"/>
</dbReference>
<dbReference type="NCBIfam" id="NF003793">
    <property type="entry name" value="PRK05382.1"/>
    <property type="match status" value="1"/>
</dbReference>
<dbReference type="PANTHER" id="PTHR21085">
    <property type="entry name" value="CHORISMATE SYNTHASE"/>
    <property type="match status" value="1"/>
</dbReference>
<dbReference type="PANTHER" id="PTHR21085:SF0">
    <property type="entry name" value="CHORISMATE SYNTHASE"/>
    <property type="match status" value="1"/>
</dbReference>
<dbReference type="Pfam" id="PF01264">
    <property type="entry name" value="Chorismate_synt"/>
    <property type="match status" value="1"/>
</dbReference>
<dbReference type="PIRSF" id="PIRSF001456">
    <property type="entry name" value="Chorismate_synth"/>
    <property type="match status" value="1"/>
</dbReference>
<dbReference type="SUPFAM" id="SSF103263">
    <property type="entry name" value="Chorismate synthase, AroC"/>
    <property type="match status" value="1"/>
</dbReference>
<dbReference type="PROSITE" id="PS00787">
    <property type="entry name" value="CHORISMATE_SYNTHASE_1"/>
    <property type="match status" value="1"/>
</dbReference>
<dbReference type="PROSITE" id="PS00788">
    <property type="entry name" value="CHORISMATE_SYNTHASE_2"/>
    <property type="match status" value="1"/>
</dbReference>
<dbReference type="PROSITE" id="PS00789">
    <property type="entry name" value="CHORISMATE_SYNTHASE_3"/>
    <property type="match status" value="1"/>
</dbReference>
<feature type="chain" id="PRO_1000022477" description="Chorismate synthase">
    <location>
        <begin position="1"/>
        <end position="359"/>
    </location>
</feature>
<feature type="binding site" evidence="1">
    <location>
        <position position="47"/>
    </location>
    <ligand>
        <name>NADP(+)</name>
        <dbReference type="ChEBI" id="CHEBI:58349"/>
    </ligand>
</feature>
<feature type="binding site" evidence="1">
    <location>
        <begin position="123"/>
        <end position="125"/>
    </location>
    <ligand>
        <name>FMN</name>
        <dbReference type="ChEBI" id="CHEBI:58210"/>
    </ligand>
</feature>
<feature type="binding site" evidence="1">
    <location>
        <position position="283"/>
    </location>
    <ligand>
        <name>FMN</name>
        <dbReference type="ChEBI" id="CHEBI:58210"/>
    </ligand>
</feature>
<feature type="binding site" evidence="1">
    <location>
        <begin position="298"/>
        <end position="302"/>
    </location>
    <ligand>
        <name>FMN</name>
        <dbReference type="ChEBI" id="CHEBI:58210"/>
    </ligand>
</feature>
<feature type="binding site" evidence="1">
    <location>
        <position position="326"/>
    </location>
    <ligand>
        <name>FMN</name>
        <dbReference type="ChEBI" id="CHEBI:58210"/>
    </ligand>
</feature>
<comment type="function">
    <text evidence="1">Catalyzes the anti-1,4-elimination of the C-3 phosphate and the C-6 proR hydrogen from 5-enolpyruvylshikimate-3-phosphate (EPSP) to yield chorismate, which is the branch point compound that serves as the starting substrate for the three terminal pathways of aromatic amino acid biosynthesis. This reaction introduces a second double bond into the aromatic ring system.</text>
</comment>
<comment type="catalytic activity">
    <reaction evidence="1">
        <text>5-O-(1-carboxyvinyl)-3-phosphoshikimate = chorismate + phosphate</text>
        <dbReference type="Rhea" id="RHEA:21020"/>
        <dbReference type="ChEBI" id="CHEBI:29748"/>
        <dbReference type="ChEBI" id="CHEBI:43474"/>
        <dbReference type="ChEBI" id="CHEBI:57701"/>
        <dbReference type="EC" id="4.2.3.5"/>
    </reaction>
</comment>
<comment type="cofactor">
    <cofactor evidence="1">
        <name>FMNH2</name>
        <dbReference type="ChEBI" id="CHEBI:57618"/>
    </cofactor>
    <text evidence="1">Reduced FMN (FMNH(2)).</text>
</comment>
<comment type="pathway">
    <text evidence="1">Metabolic intermediate biosynthesis; chorismate biosynthesis; chorismate from D-erythrose 4-phosphate and phosphoenolpyruvate: step 7/7.</text>
</comment>
<comment type="subunit">
    <text evidence="1">Homotetramer.</text>
</comment>
<comment type="similarity">
    <text evidence="1">Belongs to the chorismate synthase family.</text>
</comment>
<gene>
    <name evidence="1" type="primary">aroC</name>
    <name type="ordered locus">CCA_00725</name>
</gene>
<accession>Q822F8</accession>
<keyword id="KW-0028">Amino-acid biosynthesis</keyword>
<keyword id="KW-0057">Aromatic amino acid biosynthesis</keyword>
<keyword id="KW-0274">FAD</keyword>
<keyword id="KW-0285">Flavoprotein</keyword>
<keyword id="KW-0288">FMN</keyword>
<keyword id="KW-0456">Lyase</keyword>
<keyword id="KW-0521">NADP</keyword>
<sequence>MRNRFGSLFSLTTWGESHGPSIGVVIDGCPAGLLLDPEDFIPAMSRRSPGRPGTSPRKEADIVHILSGVYQGKTTGTPISLQIFNTDVKSATYHQQEDRYRPGHGQLAYEKKYGLVDPLGGGRSSARETACRVAAGVIAAKILAHYDIYCLAFLSKLGKESIETYPKLSKEFAQNIYNSPFLSPLDNDSILQTLTHLQNEQDSLGGVVSFITSPIHESLGEPVFNKVQAVLASGLMSIPAAKGFEIGLGFASTDSYGSEYIDPFIIENENISMGSNNCGGSLGGITVGMPLNGRVAFKPTSSIRKPFLTVTKTGEPSIYATQKEGRHDPCVAIRAVAVVEAMVNLVLADLLLQQRCARL</sequence>
<protein>
    <recommendedName>
        <fullName evidence="1">Chorismate synthase</fullName>
        <shortName evidence="1">CS</shortName>
        <ecNumber evidence="1">4.2.3.5</ecNumber>
    </recommendedName>
    <alternativeName>
        <fullName evidence="1">5-enolpyruvylshikimate-3-phosphate phospholyase</fullName>
    </alternativeName>
</protein>
<name>AROC_CHLCV</name>
<reference key="1">
    <citation type="journal article" date="2003" name="Nucleic Acids Res.">
        <title>Genome sequence of Chlamydophila caviae (Chlamydia psittaci GPIC): examining the role of niche-specific genes in the evolution of the Chlamydiaceae.</title>
        <authorList>
            <person name="Read T.D."/>
            <person name="Myers G.S.A."/>
            <person name="Brunham R.C."/>
            <person name="Nelson W.C."/>
            <person name="Paulsen I.T."/>
            <person name="Heidelberg J.F."/>
            <person name="Holtzapple E.K."/>
            <person name="Khouri H.M."/>
            <person name="Federova N.B."/>
            <person name="Carty H.A."/>
            <person name="Umayam L.A."/>
            <person name="Haft D.H."/>
            <person name="Peterson J.D."/>
            <person name="Beanan M.J."/>
            <person name="White O."/>
            <person name="Salzberg S.L."/>
            <person name="Hsia R.-C."/>
            <person name="McClarty G."/>
            <person name="Rank R.G."/>
            <person name="Bavoil P.M."/>
            <person name="Fraser C.M."/>
        </authorList>
    </citation>
    <scope>NUCLEOTIDE SEQUENCE [LARGE SCALE GENOMIC DNA]</scope>
    <source>
        <strain>ATCC VR-813 / DSM 19441 / 03DC25 / GPIC</strain>
    </source>
</reference>